<keyword id="KW-0687">Ribonucleoprotein</keyword>
<keyword id="KW-0689">Ribosomal protein</keyword>
<keyword id="KW-0694">RNA-binding</keyword>
<keyword id="KW-0699">rRNA-binding</keyword>
<proteinExistence type="inferred from homology"/>
<comment type="function">
    <text evidence="1">This protein binds specifically to 23S rRNA; its binding is stimulated by other ribosomal proteins, e.g. L4, L17, and L20. It is important during the early stages of 50S assembly. It makes multiple contacts with different domains of the 23S rRNA in the assembled 50S subunit and ribosome (By similarity).</text>
</comment>
<comment type="function">
    <text evidence="1">The globular domain of the protein is located near the polypeptide exit tunnel on the outside of the subunit, while an extended beta-hairpin is found that lines the wall of the exit tunnel in the center of the 70S ribosome.</text>
</comment>
<comment type="subunit">
    <text evidence="1">Part of the 50S ribosomal subunit.</text>
</comment>
<comment type="similarity">
    <text evidence="1">Belongs to the universal ribosomal protein uL22 family.</text>
</comment>
<gene>
    <name evidence="1" type="primary">rplV</name>
    <name type="ordered locus">BceJ2315_02420</name>
    <name type="ORF">BCAL0239</name>
</gene>
<name>RL22_BURCJ</name>
<evidence type="ECO:0000255" key="1">
    <source>
        <dbReference type="HAMAP-Rule" id="MF_01331"/>
    </source>
</evidence>
<evidence type="ECO:0000305" key="2"/>
<sequence>MEVKAIHRGARISAQKTRLVADQIRGLPVDKALNVLTFSPKKAAGIVKKVVLSAIANAEHNEGADIDELKIKSIYVDKAASLKRFTARAKGRGNRIEKQSCHITVTVGN</sequence>
<accession>B4E5C5</accession>
<reference key="1">
    <citation type="journal article" date="2009" name="J. Bacteriol.">
        <title>The genome of Burkholderia cenocepacia J2315, an epidemic pathogen of cystic fibrosis patients.</title>
        <authorList>
            <person name="Holden M.T."/>
            <person name="Seth-Smith H.M."/>
            <person name="Crossman L.C."/>
            <person name="Sebaihia M."/>
            <person name="Bentley S.D."/>
            <person name="Cerdeno-Tarraga A.M."/>
            <person name="Thomson N.R."/>
            <person name="Bason N."/>
            <person name="Quail M.A."/>
            <person name="Sharp S."/>
            <person name="Cherevach I."/>
            <person name="Churcher C."/>
            <person name="Goodhead I."/>
            <person name="Hauser H."/>
            <person name="Holroyd N."/>
            <person name="Mungall K."/>
            <person name="Scott P."/>
            <person name="Walker D."/>
            <person name="White B."/>
            <person name="Rose H."/>
            <person name="Iversen P."/>
            <person name="Mil-Homens D."/>
            <person name="Rocha E.P."/>
            <person name="Fialho A.M."/>
            <person name="Baldwin A."/>
            <person name="Dowson C."/>
            <person name="Barrell B.G."/>
            <person name="Govan J.R."/>
            <person name="Vandamme P."/>
            <person name="Hart C.A."/>
            <person name="Mahenthiralingam E."/>
            <person name="Parkhill J."/>
        </authorList>
    </citation>
    <scope>NUCLEOTIDE SEQUENCE [LARGE SCALE GENOMIC DNA]</scope>
    <source>
        <strain>ATCC BAA-245 / DSM 16553 / LMG 16656 / NCTC 13227 / J2315 / CF5610</strain>
    </source>
</reference>
<protein>
    <recommendedName>
        <fullName evidence="1">Large ribosomal subunit protein uL22</fullName>
    </recommendedName>
    <alternativeName>
        <fullName evidence="2">50S ribosomal protein L22</fullName>
    </alternativeName>
</protein>
<feature type="chain" id="PRO_1000142240" description="Large ribosomal subunit protein uL22">
    <location>
        <begin position="1"/>
        <end position="109"/>
    </location>
</feature>
<dbReference type="EMBL" id="AM747720">
    <property type="protein sequence ID" value="CAR50550.1"/>
    <property type="molecule type" value="Genomic_DNA"/>
</dbReference>
<dbReference type="RefSeq" id="WP_004199272.1">
    <property type="nucleotide sequence ID" value="NC_011000.1"/>
</dbReference>
<dbReference type="SMR" id="B4E5C5"/>
<dbReference type="GeneID" id="98107155"/>
<dbReference type="KEGG" id="bcj:BCAL0239"/>
<dbReference type="eggNOG" id="COG0091">
    <property type="taxonomic scope" value="Bacteria"/>
</dbReference>
<dbReference type="HOGENOM" id="CLU_083987_3_3_4"/>
<dbReference type="Proteomes" id="UP000001035">
    <property type="component" value="Chromosome 1"/>
</dbReference>
<dbReference type="GO" id="GO:0022625">
    <property type="term" value="C:cytosolic large ribosomal subunit"/>
    <property type="evidence" value="ECO:0007669"/>
    <property type="project" value="TreeGrafter"/>
</dbReference>
<dbReference type="GO" id="GO:0019843">
    <property type="term" value="F:rRNA binding"/>
    <property type="evidence" value="ECO:0007669"/>
    <property type="project" value="UniProtKB-UniRule"/>
</dbReference>
<dbReference type="GO" id="GO:0003735">
    <property type="term" value="F:structural constituent of ribosome"/>
    <property type="evidence" value="ECO:0007669"/>
    <property type="project" value="InterPro"/>
</dbReference>
<dbReference type="GO" id="GO:0006412">
    <property type="term" value="P:translation"/>
    <property type="evidence" value="ECO:0007669"/>
    <property type="project" value="UniProtKB-UniRule"/>
</dbReference>
<dbReference type="CDD" id="cd00336">
    <property type="entry name" value="Ribosomal_L22"/>
    <property type="match status" value="1"/>
</dbReference>
<dbReference type="FunFam" id="3.90.470.10:FF:000001">
    <property type="entry name" value="50S ribosomal protein L22"/>
    <property type="match status" value="1"/>
</dbReference>
<dbReference type="Gene3D" id="3.90.470.10">
    <property type="entry name" value="Ribosomal protein L22/L17"/>
    <property type="match status" value="1"/>
</dbReference>
<dbReference type="HAMAP" id="MF_01331_B">
    <property type="entry name" value="Ribosomal_uL22_B"/>
    <property type="match status" value="1"/>
</dbReference>
<dbReference type="InterPro" id="IPR001063">
    <property type="entry name" value="Ribosomal_uL22"/>
</dbReference>
<dbReference type="InterPro" id="IPR005727">
    <property type="entry name" value="Ribosomal_uL22_bac/chlpt-type"/>
</dbReference>
<dbReference type="InterPro" id="IPR047867">
    <property type="entry name" value="Ribosomal_uL22_bac/org-type"/>
</dbReference>
<dbReference type="InterPro" id="IPR018260">
    <property type="entry name" value="Ribosomal_uL22_CS"/>
</dbReference>
<dbReference type="InterPro" id="IPR036394">
    <property type="entry name" value="Ribosomal_uL22_sf"/>
</dbReference>
<dbReference type="NCBIfam" id="TIGR01044">
    <property type="entry name" value="rplV_bact"/>
    <property type="match status" value="1"/>
</dbReference>
<dbReference type="PANTHER" id="PTHR13501">
    <property type="entry name" value="CHLOROPLAST 50S RIBOSOMAL PROTEIN L22-RELATED"/>
    <property type="match status" value="1"/>
</dbReference>
<dbReference type="PANTHER" id="PTHR13501:SF8">
    <property type="entry name" value="LARGE RIBOSOMAL SUBUNIT PROTEIN UL22M"/>
    <property type="match status" value="1"/>
</dbReference>
<dbReference type="Pfam" id="PF00237">
    <property type="entry name" value="Ribosomal_L22"/>
    <property type="match status" value="1"/>
</dbReference>
<dbReference type="SUPFAM" id="SSF54843">
    <property type="entry name" value="Ribosomal protein L22"/>
    <property type="match status" value="1"/>
</dbReference>
<dbReference type="PROSITE" id="PS00464">
    <property type="entry name" value="RIBOSOMAL_L22"/>
    <property type="match status" value="1"/>
</dbReference>
<organism>
    <name type="scientific">Burkholderia cenocepacia (strain ATCC BAA-245 / DSM 16553 / LMG 16656 / NCTC 13227 / J2315 / CF5610)</name>
    <name type="common">Burkholderia cepacia (strain J2315)</name>
    <dbReference type="NCBI Taxonomy" id="216591"/>
    <lineage>
        <taxon>Bacteria</taxon>
        <taxon>Pseudomonadati</taxon>
        <taxon>Pseudomonadota</taxon>
        <taxon>Betaproteobacteria</taxon>
        <taxon>Burkholderiales</taxon>
        <taxon>Burkholderiaceae</taxon>
        <taxon>Burkholderia</taxon>
        <taxon>Burkholderia cepacia complex</taxon>
    </lineage>
</organism>